<dbReference type="EMBL" id="CU329670">
    <property type="protein sequence ID" value="CAA93354.2"/>
    <property type="molecule type" value="Genomic_DNA"/>
</dbReference>
<dbReference type="PIR" id="T37483">
    <property type="entry name" value="T37483"/>
</dbReference>
<dbReference type="RefSeq" id="NP_594351.2">
    <property type="nucleotide sequence ID" value="NM_001019772.2"/>
</dbReference>
<dbReference type="SMR" id="Q10222"/>
<dbReference type="BioGRID" id="279955">
    <property type="interactions" value="8"/>
</dbReference>
<dbReference type="FunCoup" id="Q10222">
    <property type="interactions" value="456"/>
</dbReference>
<dbReference type="STRING" id="284812.Q10222"/>
<dbReference type="iPTMnet" id="Q10222"/>
<dbReference type="PaxDb" id="4896-SPAC1071.01c.1"/>
<dbReference type="EnsemblFungi" id="SPAC1071.01c.1">
    <property type="protein sequence ID" value="SPAC1071.01c.1:pep"/>
    <property type="gene ID" value="SPAC1071.01c"/>
</dbReference>
<dbReference type="GeneID" id="2543538"/>
<dbReference type="KEGG" id="spo:2543538"/>
<dbReference type="PomBase" id="SPAC1071.01c">
    <property type="gene designation" value="pta1"/>
</dbReference>
<dbReference type="VEuPathDB" id="FungiDB:SPAC1071.01c"/>
<dbReference type="eggNOG" id="KOG1895">
    <property type="taxonomic scope" value="Eukaryota"/>
</dbReference>
<dbReference type="HOGENOM" id="CLU_021804_0_0_1"/>
<dbReference type="InParanoid" id="Q10222"/>
<dbReference type="OMA" id="AREMCLN"/>
<dbReference type="PhylomeDB" id="Q10222"/>
<dbReference type="Reactome" id="R-SPO-159231">
    <property type="pathway name" value="Transport of Mature mRNA Derived from an Intronless Transcript"/>
</dbReference>
<dbReference type="Reactome" id="R-SPO-77595">
    <property type="pathway name" value="Processing of Intronless Pre-mRNAs"/>
</dbReference>
<dbReference type="PRO" id="PR:Q10222"/>
<dbReference type="Proteomes" id="UP000002485">
    <property type="component" value="Chromosome I"/>
</dbReference>
<dbReference type="GO" id="GO:0005847">
    <property type="term" value="C:mRNA cleavage and polyadenylation specificity factor complex"/>
    <property type="evidence" value="ECO:0000314"/>
    <property type="project" value="PomBase"/>
</dbReference>
<dbReference type="GO" id="GO:0005634">
    <property type="term" value="C:nucleus"/>
    <property type="evidence" value="ECO:0007005"/>
    <property type="project" value="PomBase"/>
</dbReference>
<dbReference type="GO" id="GO:0180010">
    <property type="term" value="P:co-transcriptional mRNA 3'-end processing, cleavage and polyadenylation pathway"/>
    <property type="evidence" value="ECO:0000305"/>
    <property type="project" value="PomBase"/>
</dbReference>
<dbReference type="GO" id="GO:0008033">
    <property type="term" value="P:tRNA processing"/>
    <property type="evidence" value="ECO:0000266"/>
    <property type="project" value="PomBase"/>
</dbReference>
<dbReference type="Gene3D" id="1.25.10.10">
    <property type="entry name" value="Leucine-rich Repeat Variant"/>
    <property type="match status" value="1"/>
</dbReference>
<dbReference type="InterPro" id="IPR011989">
    <property type="entry name" value="ARM-like"/>
</dbReference>
<dbReference type="InterPro" id="IPR021850">
    <property type="entry name" value="Symplekin/Pta1"/>
</dbReference>
<dbReference type="InterPro" id="IPR032460">
    <property type="entry name" value="Symplekin/Pta1_N"/>
</dbReference>
<dbReference type="PANTHER" id="PTHR15245:SF20">
    <property type="entry name" value="SYMPLEKIN"/>
    <property type="match status" value="1"/>
</dbReference>
<dbReference type="PANTHER" id="PTHR15245">
    <property type="entry name" value="SYMPLEKIN-RELATED"/>
    <property type="match status" value="1"/>
</dbReference>
<dbReference type="Pfam" id="PF11935">
    <property type="entry name" value="SYMPK_PTA1_N"/>
    <property type="match status" value="1"/>
</dbReference>
<feature type="chain" id="PRO_0000116838" description="mRNA cleavage and polyadenylation specificity factor complex subunit pta1">
    <location>
        <begin position="1"/>
        <end position="670"/>
    </location>
</feature>
<reference key="1">
    <citation type="journal article" date="2002" name="Nature">
        <title>The genome sequence of Schizosaccharomyces pombe.</title>
        <authorList>
            <person name="Wood V."/>
            <person name="Gwilliam R."/>
            <person name="Rajandream M.A."/>
            <person name="Lyne M.H."/>
            <person name="Lyne R."/>
            <person name="Stewart A."/>
            <person name="Sgouros J.G."/>
            <person name="Peat N."/>
            <person name="Hayles J."/>
            <person name="Baker S.G."/>
            <person name="Basham D."/>
            <person name="Bowman S."/>
            <person name="Brooks K."/>
            <person name="Brown D."/>
            <person name="Brown S."/>
            <person name="Chillingworth T."/>
            <person name="Churcher C.M."/>
            <person name="Collins M."/>
            <person name="Connor R."/>
            <person name="Cronin A."/>
            <person name="Davis P."/>
            <person name="Feltwell T."/>
            <person name="Fraser A."/>
            <person name="Gentles S."/>
            <person name="Goble A."/>
            <person name="Hamlin N."/>
            <person name="Harris D.E."/>
            <person name="Hidalgo J."/>
            <person name="Hodgson G."/>
            <person name="Holroyd S."/>
            <person name="Hornsby T."/>
            <person name="Howarth S."/>
            <person name="Huckle E.J."/>
            <person name="Hunt S."/>
            <person name="Jagels K."/>
            <person name="James K.D."/>
            <person name="Jones L."/>
            <person name="Jones M."/>
            <person name="Leather S."/>
            <person name="McDonald S."/>
            <person name="McLean J."/>
            <person name="Mooney P."/>
            <person name="Moule S."/>
            <person name="Mungall K.L."/>
            <person name="Murphy L.D."/>
            <person name="Niblett D."/>
            <person name="Odell C."/>
            <person name="Oliver K."/>
            <person name="O'Neil S."/>
            <person name="Pearson D."/>
            <person name="Quail M.A."/>
            <person name="Rabbinowitsch E."/>
            <person name="Rutherford K.M."/>
            <person name="Rutter S."/>
            <person name="Saunders D."/>
            <person name="Seeger K."/>
            <person name="Sharp S."/>
            <person name="Skelton J."/>
            <person name="Simmonds M.N."/>
            <person name="Squares R."/>
            <person name="Squares S."/>
            <person name="Stevens K."/>
            <person name="Taylor K."/>
            <person name="Taylor R.G."/>
            <person name="Tivey A."/>
            <person name="Walsh S.V."/>
            <person name="Warren T."/>
            <person name="Whitehead S."/>
            <person name="Woodward J.R."/>
            <person name="Volckaert G."/>
            <person name="Aert R."/>
            <person name="Robben J."/>
            <person name="Grymonprez B."/>
            <person name="Weltjens I."/>
            <person name="Vanstreels E."/>
            <person name="Rieger M."/>
            <person name="Schaefer M."/>
            <person name="Mueller-Auer S."/>
            <person name="Gabel C."/>
            <person name="Fuchs M."/>
            <person name="Duesterhoeft A."/>
            <person name="Fritzc C."/>
            <person name="Holzer E."/>
            <person name="Moestl D."/>
            <person name="Hilbert H."/>
            <person name="Borzym K."/>
            <person name="Langer I."/>
            <person name="Beck A."/>
            <person name="Lehrach H."/>
            <person name="Reinhardt R."/>
            <person name="Pohl T.M."/>
            <person name="Eger P."/>
            <person name="Zimmermann W."/>
            <person name="Wedler H."/>
            <person name="Wambutt R."/>
            <person name="Purnelle B."/>
            <person name="Goffeau A."/>
            <person name="Cadieu E."/>
            <person name="Dreano S."/>
            <person name="Gloux S."/>
            <person name="Lelaure V."/>
            <person name="Mottier S."/>
            <person name="Galibert F."/>
            <person name="Aves S.J."/>
            <person name="Xiang Z."/>
            <person name="Hunt C."/>
            <person name="Moore K."/>
            <person name="Hurst S.M."/>
            <person name="Lucas M."/>
            <person name="Rochet M."/>
            <person name="Gaillardin C."/>
            <person name="Tallada V.A."/>
            <person name="Garzon A."/>
            <person name="Thode G."/>
            <person name="Daga R.R."/>
            <person name="Cruzado L."/>
            <person name="Jimenez J."/>
            <person name="Sanchez M."/>
            <person name="del Rey F."/>
            <person name="Benito J."/>
            <person name="Dominguez A."/>
            <person name="Revuelta J.L."/>
            <person name="Moreno S."/>
            <person name="Armstrong J."/>
            <person name="Forsburg S.L."/>
            <person name="Cerutti L."/>
            <person name="Lowe T."/>
            <person name="McCombie W.R."/>
            <person name="Paulsen I."/>
            <person name="Potashkin J."/>
            <person name="Shpakovski G.V."/>
            <person name="Ussery D."/>
            <person name="Barrell B.G."/>
            <person name="Nurse P."/>
        </authorList>
    </citation>
    <scope>NUCLEOTIDE SEQUENCE [LARGE SCALE GENOMIC DNA]</scope>
    <source>
        <strain>972 / ATCC 24843</strain>
    </source>
</reference>
<reference key="2">
    <citation type="journal article" date="2004" name="Mol. Cell. Proteomics">
        <title>A comparative analysis of an orthologous proteomic environment in the yeasts Saccharomyces cerevisiae and Schizosaccharomyces pombe.</title>
        <authorList>
            <person name="Roguev A."/>
            <person name="Shevchenko A."/>
            <person name="Schaft D."/>
            <person name="Thomas H."/>
            <person name="Stewart A.F."/>
            <person name="Shevchenko A."/>
        </authorList>
    </citation>
    <scope>IDENTIFICATION IN THE CPF COMPLEX</scope>
</reference>
<reference key="3">
    <citation type="journal article" date="2006" name="Nat. Biotechnol.">
        <title>ORFeome cloning and global analysis of protein localization in the fission yeast Schizosaccharomyces pombe.</title>
        <authorList>
            <person name="Matsuyama A."/>
            <person name="Arai R."/>
            <person name="Yashiroda Y."/>
            <person name="Shirai A."/>
            <person name="Kamata A."/>
            <person name="Sekido S."/>
            <person name="Kobayashi Y."/>
            <person name="Hashimoto A."/>
            <person name="Hamamoto M."/>
            <person name="Hiraoka Y."/>
            <person name="Horinouchi S."/>
            <person name="Yoshida M."/>
        </authorList>
    </citation>
    <scope>SUBCELLULAR LOCATION [LARGE SCALE ANALYSIS]</scope>
</reference>
<organism>
    <name type="scientific">Schizosaccharomyces pombe (strain 972 / ATCC 24843)</name>
    <name type="common">Fission yeast</name>
    <dbReference type="NCBI Taxonomy" id="284812"/>
    <lineage>
        <taxon>Eukaryota</taxon>
        <taxon>Fungi</taxon>
        <taxon>Dikarya</taxon>
        <taxon>Ascomycota</taxon>
        <taxon>Taphrinomycotina</taxon>
        <taxon>Schizosaccharomycetes</taxon>
        <taxon>Schizosaccharomycetales</taxon>
        <taxon>Schizosaccharomycetaceae</taxon>
        <taxon>Schizosaccharomyces</taxon>
    </lineage>
</organism>
<comment type="function">
    <text>Component of the cleavage and polyadenylation factor (CPF) complex, which plays a key role in polyadenylation-dependent pre-mRNA 3'-end formation and cooperates with cleavage factors including the CFIA complex and NAB4/CFIB.</text>
</comment>
<comment type="subunit">
    <text evidence="1">Component of the cleavage and polyadenylation factor (CPF) complex, which is composed of cft1, cft2, ysh1, pta1, swd2, pfs2, dis2, yth1, ssu72, and fip1.</text>
</comment>
<comment type="subcellular location">
    <subcellularLocation>
        <location evidence="2">Nucleus</location>
    </subcellularLocation>
</comment>
<comment type="similarity">
    <text evidence="3">To yeast PTA1.</text>
</comment>
<accession>Q10222</accession>
<accession>Q9UTR2</accession>
<evidence type="ECO:0000269" key="1">
    <source>
    </source>
</evidence>
<evidence type="ECO:0000269" key="2">
    <source>
    </source>
</evidence>
<evidence type="ECO:0000305" key="3"/>
<keyword id="KW-0507">mRNA processing</keyword>
<keyword id="KW-0539">Nucleus</keyword>
<keyword id="KW-1185">Reference proteome</keyword>
<sequence length="670" mass="76233">MEVSETDEHLTRLNQARDIVKTDQSLFPEIVRNILSVANYSDIRYKKWMANFLWFGFSSKNVKFEQKLDLAVTCLDTIVSLYAVDNEEVKKDVISCSCTIYPLVFLHCCTSPNDSSTWDTLTKLKNEIINDFDKGNKPLLISCIKFISCVILTQVPGIRDPRLVTKSDVSLSKVPTHHPFINSNILRIEANDLIEKIFSILFSDSLNVLYITSVLNILPVLVKRRKELAPKIIGSLLEFHLPNPKDEIELSNESKLAIRCIEKNLKLILLHLAKSTGASSSSVEKIHAYLSGQIYHTKVDESLKKRQYEGNISAASKRVKSSAVQSLVERMQPQLSSHDGLQNNPLISIFASQTAINPLANFDVTSIPVEVATEIVLTSLLKIDKNYFHQQINMLRERVRSLSEPESLGLDQQVDEDEDEDYEPPEVDVQTINASVEREAARLEGSAPSNVVTDAFELPTPDSLSPMAILEYFHGALSRLFDYAPQFERSIVSSSNLQNLTLENVDNTVWDKRHWAILLPRLCTRGLLNYQPVTSGEESGDASFTLSSFVRGQLFTYVASNWRSSTNLILNWLSEEWYNDRLMLENPDCHEYEDVKWEGPQYEKWALKVIDSILPYLEAKDKVFMIFMSELPELTDAIVDKIKFVCLDPDKTKLGFMTFQYLIMFRLTCT</sequence>
<protein>
    <recommendedName>
        <fullName>mRNA cleavage and polyadenylation specificity factor complex subunit pta1</fullName>
    </recommendedName>
</protein>
<gene>
    <name type="primary">pta1</name>
    <name type="ORF">SPAC1071.01c</name>
    <name type="ORF">SPAC4H3.15c</name>
</gene>
<proteinExistence type="evidence at protein level"/>
<name>PTA1_SCHPO</name>